<proteinExistence type="inferred from homology"/>
<dbReference type="EMBL" id="CU928158">
    <property type="protein sequence ID" value="CAQ90642.1"/>
    <property type="molecule type" value="Genomic_DNA"/>
</dbReference>
<dbReference type="RefSeq" id="WP_001300397.1">
    <property type="nucleotide sequence ID" value="NC_011740.1"/>
</dbReference>
<dbReference type="SMR" id="B7LR39"/>
<dbReference type="GeneID" id="93778813"/>
<dbReference type="KEGG" id="efe:EFER_3149"/>
<dbReference type="HOGENOM" id="CLU_070525_1_1_6"/>
<dbReference type="OrthoDB" id="9805006at2"/>
<dbReference type="Proteomes" id="UP000000745">
    <property type="component" value="Chromosome"/>
</dbReference>
<dbReference type="GO" id="GO:0005829">
    <property type="term" value="C:cytosol"/>
    <property type="evidence" value="ECO:0007669"/>
    <property type="project" value="TreeGrafter"/>
</dbReference>
<dbReference type="GO" id="GO:0000028">
    <property type="term" value="P:ribosomal small subunit assembly"/>
    <property type="evidence" value="ECO:0007669"/>
    <property type="project" value="TreeGrafter"/>
</dbReference>
<dbReference type="GO" id="GO:0006412">
    <property type="term" value="P:translation"/>
    <property type="evidence" value="ECO:0007669"/>
    <property type="project" value="TreeGrafter"/>
</dbReference>
<dbReference type="CDD" id="cd01734">
    <property type="entry name" value="YlxS_C"/>
    <property type="match status" value="1"/>
</dbReference>
<dbReference type="FunFam" id="2.30.30.180:FF:000001">
    <property type="entry name" value="Ribosome maturation factor RimP"/>
    <property type="match status" value="1"/>
</dbReference>
<dbReference type="FunFam" id="3.30.300.70:FF:000001">
    <property type="entry name" value="Ribosome maturation factor RimP"/>
    <property type="match status" value="1"/>
</dbReference>
<dbReference type="Gene3D" id="2.30.30.180">
    <property type="entry name" value="Ribosome maturation factor RimP, C-terminal domain"/>
    <property type="match status" value="1"/>
</dbReference>
<dbReference type="Gene3D" id="3.30.300.70">
    <property type="entry name" value="RimP-like superfamily, N-terminal"/>
    <property type="match status" value="1"/>
</dbReference>
<dbReference type="HAMAP" id="MF_01077">
    <property type="entry name" value="RimP"/>
    <property type="match status" value="1"/>
</dbReference>
<dbReference type="InterPro" id="IPR003728">
    <property type="entry name" value="Ribosome_maturation_RimP"/>
</dbReference>
<dbReference type="InterPro" id="IPR028998">
    <property type="entry name" value="RimP_C"/>
</dbReference>
<dbReference type="InterPro" id="IPR036847">
    <property type="entry name" value="RimP_C_sf"/>
</dbReference>
<dbReference type="InterPro" id="IPR028989">
    <property type="entry name" value="RimP_N"/>
</dbReference>
<dbReference type="InterPro" id="IPR035956">
    <property type="entry name" value="RimP_N_sf"/>
</dbReference>
<dbReference type="NCBIfam" id="NF000927">
    <property type="entry name" value="PRK00092.1-1"/>
    <property type="match status" value="1"/>
</dbReference>
<dbReference type="PANTHER" id="PTHR33867">
    <property type="entry name" value="RIBOSOME MATURATION FACTOR RIMP"/>
    <property type="match status" value="1"/>
</dbReference>
<dbReference type="PANTHER" id="PTHR33867:SF1">
    <property type="entry name" value="RIBOSOME MATURATION FACTOR RIMP"/>
    <property type="match status" value="1"/>
</dbReference>
<dbReference type="Pfam" id="PF17384">
    <property type="entry name" value="DUF150_C"/>
    <property type="match status" value="1"/>
</dbReference>
<dbReference type="Pfam" id="PF02576">
    <property type="entry name" value="RimP_N"/>
    <property type="match status" value="1"/>
</dbReference>
<dbReference type="SUPFAM" id="SSF74942">
    <property type="entry name" value="YhbC-like, C-terminal domain"/>
    <property type="match status" value="1"/>
</dbReference>
<dbReference type="SUPFAM" id="SSF75420">
    <property type="entry name" value="YhbC-like, N-terminal domain"/>
    <property type="match status" value="1"/>
</dbReference>
<evidence type="ECO:0000255" key="1">
    <source>
        <dbReference type="HAMAP-Rule" id="MF_01077"/>
    </source>
</evidence>
<protein>
    <recommendedName>
        <fullName evidence="1">Ribosome maturation factor RimP</fullName>
    </recommendedName>
</protein>
<sequence length="150" mass="16651">MSTLEQKLTEMITAPVEALGFELVGIEFIRGRTSTLRIYIDSEDGINVDDCADVSHQVSAVLDVEDPITVAYNLEVSSPGLDRPLFTAEHYARFVGEEVTLVLRMAVQNRRKWQGVIKAVDGEMITVTVEGKDEVFALSNIQKANLVPHF</sequence>
<keyword id="KW-0963">Cytoplasm</keyword>
<keyword id="KW-0690">Ribosome biogenesis</keyword>
<reference key="1">
    <citation type="journal article" date="2009" name="PLoS Genet.">
        <title>Organised genome dynamics in the Escherichia coli species results in highly diverse adaptive paths.</title>
        <authorList>
            <person name="Touchon M."/>
            <person name="Hoede C."/>
            <person name="Tenaillon O."/>
            <person name="Barbe V."/>
            <person name="Baeriswyl S."/>
            <person name="Bidet P."/>
            <person name="Bingen E."/>
            <person name="Bonacorsi S."/>
            <person name="Bouchier C."/>
            <person name="Bouvet O."/>
            <person name="Calteau A."/>
            <person name="Chiapello H."/>
            <person name="Clermont O."/>
            <person name="Cruveiller S."/>
            <person name="Danchin A."/>
            <person name="Diard M."/>
            <person name="Dossat C."/>
            <person name="Karoui M.E."/>
            <person name="Frapy E."/>
            <person name="Garry L."/>
            <person name="Ghigo J.M."/>
            <person name="Gilles A.M."/>
            <person name="Johnson J."/>
            <person name="Le Bouguenec C."/>
            <person name="Lescat M."/>
            <person name="Mangenot S."/>
            <person name="Martinez-Jehanne V."/>
            <person name="Matic I."/>
            <person name="Nassif X."/>
            <person name="Oztas S."/>
            <person name="Petit M.A."/>
            <person name="Pichon C."/>
            <person name="Rouy Z."/>
            <person name="Ruf C.S."/>
            <person name="Schneider D."/>
            <person name="Tourret J."/>
            <person name="Vacherie B."/>
            <person name="Vallenet D."/>
            <person name="Medigue C."/>
            <person name="Rocha E.P.C."/>
            <person name="Denamur E."/>
        </authorList>
    </citation>
    <scope>NUCLEOTIDE SEQUENCE [LARGE SCALE GENOMIC DNA]</scope>
    <source>
        <strain>ATCC 35469 / DSM 13698 / BCRC 15582 / CCUG 18766 / IAM 14443 / JCM 21226 / LMG 7866 / NBRC 102419 / NCTC 12128 / CDC 0568-73</strain>
    </source>
</reference>
<feature type="chain" id="PRO_0000384666" description="Ribosome maturation factor RimP">
    <location>
        <begin position="1"/>
        <end position="150"/>
    </location>
</feature>
<organism>
    <name type="scientific">Escherichia fergusonii (strain ATCC 35469 / DSM 13698 / CCUG 18766 / IAM 14443 / JCM 21226 / LMG 7866 / NBRC 102419 / NCTC 12128 / CDC 0568-73)</name>
    <dbReference type="NCBI Taxonomy" id="585054"/>
    <lineage>
        <taxon>Bacteria</taxon>
        <taxon>Pseudomonadati</taxon>
        <taxon>Pseudomonadota</taxon>
        <taxon>Gammaproteobacteria</taxon>
        <taxon>Enterobacterales</taxon>
        <taxon>Enterobacteriaceae</taxon>
        <taxon>Escherichia</taxon>
    </lineage>
</organism>
<accession>B7LR39</accession>
<name>RIMP_ESCF3</name>
<gene>
    <name evidence="1" type="primary">rimP</name>
    <name type="ordered locus">EFER_3149</name>
</gene>
<comment type="function">
    <text evidence="1">Required for maturation of 30S ribosomal subunits.</text>
</comment>
<comment type="subcellular location">
    <subcellularLocation>
        <location evidence="1">Cytoplasm</location>
    </subcellularLocation>
</comment>
<comment type="similarity">
    <text evidence="1">Belongs to the RimP family.</text>
</comment>